<sequence length="301" mass="31935">MTLERDAASNVAKVLSEALPYIRRFVGKTLVIKYGGNAMESEELKTGFARDIVLMKAVGINPVVVHGGGPQIGDLLKRLSIESHFIDGMRVTDAQTMDVVEMVLGGQVNKDIVNLINRHGGSAIGLTGKDAELIRAKKLTVTRQTPEMTKPEIIDIGQVGEVVGVNTGLLNMLVKGDFIPVIAPIGVGPDGESYNINADLVAGKVAEALKAEKLILLTNIAGLMNKQGEVLTGLTTEQVDGLIADGTIYGGMLPKIRCALEAVQGGVNSSHIIDGRVPNAVLLEIFTDSGVGTQITNRKRH</sequence>
<evidence type="ECO:0000255" key="1">
    <source>
        <dbReference type="HAMAP-Rule" id="MF_00082"/>
    </source>
</evidence>
<gene>
    <name evidence="1" type="primary">argB</name>
    <name type="ordered locus">PSPTO_0082</name>
</gene>
<reference key="1">
    <citation type="journal article" date="2003" name="Proc. Natl. Acad. Sci. U.S.A.">
        <title>The complete genome sequence of the Arabidopsis and tomato pathogen Pseudomonas syringae pv. tomato DC3000.</title>
        <authorList>
            <person name="Buell C.R."/>
            <person name="Joardar V."/>
            <person name="Lindeberg M."/>
            <person name="Selengut J."/>
            <person name="Paulsen I.T."/>
            <person name="Gwinn M.L."/>
            <person name="Dodson R.J."/>
            <person name="DeBoy R.T."/>
            <person name="Durkin A.S."/>
            <person name="Kolonay J.F."/>
            <person name="Madupu R."/>
            <person name="Daugherty S.C."/>
            <person name="Brinkac L.M."/>
            <person name="Beanan M.J."/>
            <person name="Haft D.H."/>
            <person name="Nelson W.C."/>
            <person name="Davidsen T.M."/>
            <person name="Zafar N."/>
            <person name="Zhou L."/>
            <person name="Liu J."/>
            <person name="Yuan Q."/>
            <person name="Khouri H.M."/>
            <person name="Fedorova N.B."/>
            <person name="Tran B."/>
            <person name="Russell D."/>
            <person name="Berry K.J."/>
            <person name="Utterback T.R."/>
            <person name="Van Aken S.E."/>
            <person name="Feldblyum T.V."/>
            <person name="D'Ascenzo M."/>
            <person name="Deng W.-L."/>
            <person name="Ramos A.R."/>
            <person name="Alfano J.R."/>
            <person name="Cartinhour S."/>
            <person name="Chatterjee A.K."/>
            <person name="Delaney T.P."/>
            <person name="Lazarowitz S.G."/>
            <person name="Martin G.B."/>
            <person name="Schneider D.J."/>
            <person name="Tang X."/>
            <person name="Bender C.L."/>
            <person name="White O."/>
            <person name="Fraser C.M."/>
            <person name="Collmer A."/>
        </authorList>
    </citation>
    <scope>NUCLEOTIDE SEQUENCE [LARGE SCALE GENOMIC DNA]</scope>
    <source>
        <strain>ATCC BAA-871 / DC3000</strain>
    </source>
</reference>
<name>ARGB_PSESM</name>
<keyword id="KW-0028">Amino-acid biosynthesis</keyword>
<keyword id="KW-0055">Arginine biosynthesis</keyword>
<keyword id="KW-0067">ATP-binding</keyword>
<keyword id="KW-0963">Cytoplasm</keyword>
<keyword id="KW-0418">Kinase</keyword>
<keyword id="KW-0547">Nucleotide-binding</keyword>
<keyword id="KW-1185">Reference proteome</keyword>
<keyword id="KW-0808">Transferase</keyword>
<comment type="function">
    <text evidence="1">Catalyzes the ATP-dependent phosphorylation of N-acetyl-L-glutamate.</text>
</comment>
<comment type="catalytic activity">
    <reaction evidence="1">
        <text>N-acetyl-L-glutamate + ATP = N-acetyl-L-glutamyl 5-phosphate + ADP</text>
        <dbReference type="Rhea" id="RHEA:14629"/>
        <dbReference type="ChEBI" id="CHEBI:30616"/>
        <dbReference type="ChEBI" id="CHEBI:44337"/>
        <dbReference type="ChEBI" id="CHEBI:57936"/>
        <dbReference type="ChEBI" id="CHEBI:456216"/>
        <dbReference type="EC" id="2.7.2.8"/>
    </reaction>
</comment>
<comment type="pathway">
    <text evidence="1">Amino-acid biosynthesis; L-arginine biosynthesis; N(2)-acetyl-L-ornithine from L-glutamate: step 2/4.</text>
</comment>
<comment type="subcellular location">
    <subcellularLocation>
        <location evidence="1">Cytoplasm</location>
    </subcellularLocation>
</comment>
<comment type="similarity">
    <text evidence="1">Belongs to the acetylglutamate kinase family. ArgB subfamily.</text>
</comment>
<protein>
    <recommendedName>
        <fullName evidence="1">Acetylglutamate kinase</fullName>
        <ecNumber evidence="1">2.7.2.8</ecNumber>
    </recommendedName>
    <alternativeName>
        <fullName evidence="1">N-acetyl-L-glutamate 5-phosphotransferase</fullName>
    </alternativeName>
    <alternativeName>
        <fullName evidence="1">NAG kinase</fullName>
        <shortName evidence="1">NAGK</shortName>
    </alternativeName>
</protein>
<proteinExistence type="inferred from homology"/>
<accession>Q88BD5</accession>
<feature type="chain" id="PRO_0000112652" description="Acetylglutamate kinase">
    <location>
        <begin position="1"/>
        <end position="301"/>
    </location>
</feature>
<feature type="binding site" evidence="1">
    <location>
        <begin position="68"/>
        <end position="69"/>
    </location>
    <ligand>
        <name>substrate</name>
    </ligand>
</feature>
<feature type="binding site" evidence="1">
    <location>
        <position position="90"/>
    </location>
    <ligand>
        <name>substrate</name>
    </ligand>
</feature>
<feature type="binding site" evidence="1">
    <location>
        <position position="195"/>
    </location>
    <ligand>
        <name>substrate</name>
    </ligand>
</feature>
<feature type="site" description="Transition state stabilizer" evidence="1">
    <location>
        <position position="33"/>
    </location>
</feature>
<feature type="site" description="Transition state stabilizer" evidence="1">
    <location>
        <position position="255"/>
    </location>
</feature>
<organism>
    <name type="scientific">Pseudomonas syringae pv. tomato (strain ATCC BAA-871 / DC3000)</name>
    <dbReference type="NCBI Taxonomy" id="223283"/>
    <lineage>
        <taxon>Bacteria</taxon>
        <taxon>Pseudomonadati</taxon>
        <taxon>Pseudomonadota</taxon>
        <taxon>Gammaproteobacteria</taxon>
        <taxon>Pseudomonadales</taxon>
        <taxon>Pseudomonadaceae</taxon>
        <taxon>Pseudomonas</taxon>
    </lineage>
</organism>
<dbReference type="EC" id="2.7.2.8" evidence="1"/>
<dbReference type="EMBL" id="AE016853">
    <property type="protein sequence ID" value="AAO53636.1"/>
    <property type="molecule type" value="Genomic_DNA"/>
</dbReference>
<dbReference type="RefSeq" id="NP_789941.1">
    <property type="nucleotide sequence ID" value="NC_004578.1"/>
</dbReference>
<dbReference type="RefSeq" id="WP_002551508.1">
    <property type="nucleotide sequence ID" value="NC_004578.1"/>
</dbReference>
<dbReference type="SMR" id="Q88BD5"/>
<dbReference type="STRING" id="223283.PSPTO_0082"/>
<dbReference type="GeneID" id="69857271"/>
<dbReference type="KEGG" id="pst:PSPTO_0082"/>
<dbReference type="PATRIC" id="fig|223283.9.peg.86"/>
<dbReference type="eggNOG" id="COG0548">
    <property type="taxonomic scope" value="Bacteria"/>
</dbReference>
<dbReference type="HOGENOM" id="CLU_053680_0_0_6"/>
<dbReference type="OrthoDB" id="9803155at2"/>
<dbReference type="PhylomeDB" id="Q88BD5"/>
<dbReference type="UniPathway" id="UPA00068">
    <property type="reaction ID" value="UER00107"/>
</dbReference>
<dbReference type="Proteomes" id="UP000002515">
    <property type="component" value="Chromosome"/>
</dbReference>
<dbReference type="GO" id="GO:0005737">
    <property type="term" value="C:cytoplasm"/>
    <property type="evidence" value="ECO:0007669"/>
    <property type="project" value="UniProtKB-SubCell"/>
</dbReference>
<dbReference type="GO" id="GO:0003991">
    <property type="term" value="F:acetylglutamate kinase activity"/>
    <property type="evidence" value="ECO:0007669"/>
    <property type="project" value="UniProtKB-UniRule"/>
</dbReference>
<dbReference type="GO" id="GO:0005524">
    <property type="term" value="F:ATP binding"/>
    <property type="evidence" value="ECO:0007669"/>
    <property type="project" value="UniProtKB-UniRule"/>
</dbReference>
<dbReference type="GO" id="GO:0042450">
    <property type="term" value="P:arginine biosynthetic process via ornithine"/>
    <property type="evidence" value="ECO:0007669"/>
    <property type="project" value="UniProtKB-UniRule"/>
</dbReference>
<dbReference type="GO" id="GO:0006526">
    <property type="term" value="P:L-arginine biosynthetic process"/>
    <property type="evidence" value="ECO:0007669"/>
    <property type="project" value="UniProtKB-UniPathway"/>
</dbReference>
<dbReference type="CDD" id="cd04250">
    <property type="entry name" value="AAK_NAGK-C"/>
    <property type="match status" value="1"/>
</dbReference>
<dbReference type="FunFam" id="3.40.1160.10:FF:000004">
    <property type="entry name" value="Acetylglutamate kinase"/>
    <property type="match status" value="1"/>
</dbReference>
<dbReference type="Gene3D" id="3.40.1160.10">
    <property type="entry name" value="Acetylglutamate kinase-like"/>
    <property type="match status" value="1"/>
</dbReference>
<dbReference type="HAMAP" id="MF_00082">
    <property type="entry name" value="ArgB"/>
    <property type="match status" value="1"/>
</dbReference>
<dbReference type="InterPro" id="IPR036393">
    <property type="entry name" value="AceGlu_kinase-like_sf"/>
</dbReference>
<dbReference type="InterPro" id="IPR004662">
    <property type="entry name" value="AcgluKinase_fam"/>
</dbReference>
<dbReference type="InterPro" id="IPR037528">
    <property type="entry name" value="ArgB"/>
</dbReference>
<dbReference type="InterPro" id="IPR001048">
    <property type="entry name" value="Asp/Glu/Uridylate_kinase"/>
</dbReference>
<dbReference type="InterPro" id="IPR041727">
    <property type="entry name" value="NAGK-C"/>
</dbReference>
<dbReference type="NCBIfam" id="TIGR00761">
    <property type="entry name" value="argB"/>
    <property type="match status" value="1"/>
</dbReference>
<dbReference type="PANTHER" id="PTHR23342">
    <property type="entry name" value="N-ACETYLGLUTAMATE SYNTHASE"/>
    <property type="match status" value="1"/>
</dbReference>
<dbReference type="PANTHER" id="PTHR23342:SF0">
    <property type="entry name" value="N-ACETYLGLUTAMATE SYNTHASE, MITOCHONDRIAL"/>
    <property type="match status" value="1"/>
</dbReference>
<dbReference type="Pfam" id="PF00696">
    <property type="entry name" value="AA_kinase"/>
    <property type="match status" value="1"/>
</dbReference>
<dbReference type="PIRSF" id="PIRSF000728">
    <property type="entry name" value="NAGK"/>
    <property type="match status" value="1"/>
</dbReference>
<dbReference type="SUPFAM" id="SSF53633">
    <property type="entry name" value="Carbamate kinase-like"/>
    <property type="match status" value="1"/>
</dbReference>